<comment type="function">
    <text evidence="3 4 5">Controls heterocyst pattern formation. Required for the differentiation of intercalary heterocysts but not for terminal heterocysts.</text>
</comment>
<comment type="subcellular location">
    <subcellularLocation>
        <location evidence="4">Cell septum</location>
    </subcellularLocation>
    <text>Localizes at sites of cell division.</text>
</comment>
<comment type="induction">
    <text evidence="3 4 5">By nitrogen starvation. Induction requires HetR. Transcription positively regulated by NtcA.</text>
</comment>
<organism>
    <name type="scientific">Nostoc sp. (strain PCC 7120 / SAG 25.82 / UTEX 2576)</name>
    <dbReference type="NCBI Taxonomy" id="103690"/>
    <lineage>
        <taxon>Bacteria</taxon>
        <taxon>Bacillati</taxon>
        <taxon>Cyanobacteriota</taxon>
        <taxon>Cyanophyceae</taxon>
        <taxon>Nostocales</taxon>
        <taxon>Nostocaceae</taxon>
        <taxon>Nostoc</taxon>
    </lineage>
</organism>
<proteinExistence type="evidence at transcript level"/>
<accession>P39048</accession>
<name>PATA_NOSS1</name>
<evidence type="ECO:0000255" key="1">
    <source>
        <dbReference type="PROSITE-ProRule" id="PRU00169"/>
    </source>
</evidence>
<evidence type="ECO:0000256" key="2">
    <source>
        <dbReference type="SAM" id="MobiDB-lite"/>
    </source>
</evidence>
<evidence type="ECO:0000269" key="3">
    <source>
    </source>
</evidence>
<evidence type="ECO:0000269" key="4">
    <source>
    </source>
</evidence>
<evidence type="ECO:0000269" key="5">
    <source>
    </source>
</evidence>
<feature type="chain" id="PRO_0000081182" description="Protein PatA">
    <location>
        <begin position="1"/>
        <end position="379"/>
    </location>
</feature>
<feature type="domain" description="Response regulatory" evidence="1">
    <location>
        <begin position="262"/>
        <end position="378"/>
    </location>
</feature>
<feature type="region of interest" description="Disordered" evidence="2">
    <location>
        <begin position="181"/>
        <end position="226"/>
    </location>
</feature>
<feature type="compositionally biased region" description="Polar residues" evidence="2">
    <location>
        <begin position="186"/>
        <end position="212"/>
    </location>
</feature>
<feature type="modified residue" description="4-aspartylphosphate" evidence="1">
    <location>
        <position position="313"/>
    </location>
</feature>
<protein>
    <recommendedName>
        <fullName>Protein PatA</fullName>
    </recommendedName>
    <alternativeName>
        <fullName>PAT-1</fullName>
    </alternativeName>
</protein>
<dbReference type="EMBL" id="M87501">
    <property type="protein sequence ID" value="AAB59012.1"/>
    <property type="molecule type" value="Genomic_DNA"/>
</dbReference>
<dbReference type="EMBL" id="AF178757">
    <property type="protein sequence ID" value="AAG09314.1"/>
    <property type="molecule type" value="Genomic_DNA"/>
</dbReference>
<dbReference type="EMBL" id="BA000019">
    <property type="protein sequence ID" value="BAB72479.1"/>
    <property type="molecule type" value="Genomic_DNA"/>
</dbReference>
<dbReference type="PIR" id="A45267">
    <property type="entry name" value="A45267"/>
</dbReference>
<dbReference type="PIR" id="AH1871">
    <property type="entry name" value="AH1871"/>
</dbReference>
<dbReference type="SMR" id="P39048"/>
<dbReference type="IntAct" id="P39048">
    <property type="interactions" value="7"/>
</dbReference>
<dbReference type="STRING" id="103690.gene:10492532"/>
<dbReference type="KEGG" id="ana:all0521"/>
<dbReference type="eggNOG" id="COG0784">
    <property type="taxonomic scope" value="Bacteria"/>
</dbReference>
<dbReference type="OrthoDB" id="9809318at2"/>
<dbReference type="Proteomes" id="UP000002483">
    <property type="component" value="Chromosome"/>
</dbReference>
<dbReference type="GO" id="GO:0030428">
    <property type="term" value="C:cell septum"/>
    <property type="evidence" value="ECO:0000314"/>
    <property type="project" value="UniProtKB"/>
</dbReference>
<dbReference type="GO" id="GO:0006995">
    <property type="term" value="P:cellular response to nitrogen starvation"/>
    <property type="evidence" value="ECO:0000314"/>
    <property type="project" value="UniProtKB"/>
</dbReference>
<dbReference type="GO" id="GO:0043158">
    <property type="term" value="P:heterocyst development"/>
    <property type="evidence" value="ECO:0000314"/>
    <property type="project" value="UniProtKB"/>
</dbReference>
<dbReference type="GO" id="GO:0000160">
    <property type="term" value="P:phosphorelay signal transduction system"/>
    <property type="evidence" value="ECO:0007669"/>
    <property type="project" value="UniProtKB-KW"/>
</dbReference>
<dbReference type="CDD" id="cd17602">
    <property type="entry name" value="REC_PatA-like"/>
    <property type="match status" value="1"/>
</dbReference>
<dbReference type="Gene3D" id="3.40.50.2300">
    <property type="match status" value="1"/>
</dbReference>
<dbReference type="InterPro" id="IPR050595">
    <property type="entry name" value="Bact_response_regulator"/>
</dbReference>
<dbReference type="InterPro" id="IPR011006">
    <property type="entry name" value="CheY-like_superfamily"/>
</dbReference>
<dbReference type="InterPro" id="IPR025497">
    <property type="entry name" value="PatA-like_N"/>
</dbReference>
<dbReference type="InterPro" id="IPR024186">
    <property type="entry name" value="Sig_transdc_resp-reg_PatA"/>
</dbReference>
<dbReference type="InterPro" id="IPR001789">
    <property type="entry name" value="Sig_transdc_resp-reg_receiver"/>
</dbReference>
<dbReference type="PANTHER" id="PTHR44591:SF23">
    <property type="entry name" value="CHEY SUBFAMILY"/>
    <property type="match status" value="1"/>
</dbReference>
<dbReference type="PANTHER" id="PTHR44591">
    <property type="entry name" value="STRESS RESPONSE REGULATOR PROTEIN 1"/>
    <property type="match status" value="1"/>
</dbReference>
<dbReference type="Pfam" id="PF14332">
    <property type="entry name" value="DUF4388"/>
    <property type="match status" value="1"/>
</dbReference>
<dbReference type="Pfam" id="PF00072">
    <property type="entry name" value="Response_reg"/>
    <property type="match status" value="1"/>
</dbReference>
<dbReference type="PIRSF" id="PIRSF005897">
    <property type="entry name" value="RR_PatA"/>
    <property type="match status" value="1"/>
</dbReference>
<dbReference type="SMART" id="SM00448">
    <property type="entry name" value="REC"/>
    <property type="match status" value="1"/>
</dbReference>
<dbReference type="SUPFAM" id="SSF52172">
    <property type="entry name" value="CheY-like"/>
    <property type="match status" value="1"/>
</dbReference>
<dbReference type="PROSITE" id="PS50110">
    <property type="entry name" value="RESPONSE_REGULATORY"/>
    <property type="match status" value="1"/>
</dbReference>
<reference key="1">
    <citation type="journal article" date="1992" name="Proc. Natl. Acad. Sci. U.S.A.">
        <title>The patA gene product, which contains a region similar to CheY of Escherichia coli, controls heterocyst pattern formation in the cyanobacterium Anabaena 7120.</title>
        <authorList>
            <person name="Liang J.-J."/>
            <person name="Scappino L."/>
            <person name="Haselkorn R."/>
        </authorList>
    </citation>
    <scope>NUCLEOTIDE SEQUENCE [GENOMIC DNA]</scope>
    <scope>FUNCTION</scope>
    <scope>INDUCTION</scope>
</reference>
<reference key="2">
    <citation type="journal article" date="2001" name="Anal. Biochem.">
        <title>Recombinant phycobiliproteins. Recombinant C-phycocyanins equipped with affinity tags, oligomerization, and biospecific recognition domains.</title>
        <authorList>
            <person name="Cai Y.A."/>
            <person name="Murphy J.T."/>
            <person name="Wedemayer G.J."/>
            <person name="Glazer A.N."/>
        </authorList>
    </citation>
    <scope>NUCLEOTIDE SEQUENCE [GENOMIC DNA]</scope>
</reference>
<reference key="3">
    <citation type="journal article" date="2001" name="DNA Res.">
        <title>Complete genomic sequence of the filamentous nitrogen-fixing cyanobacterium Anabaena sp. strain PCC 7120.</title>
        <authorList>
            <person name="Kaneko T."/>
            <person name="Nakamura Y."/>
            <person name="Wolk C.P."/>
            <person name="Kuritz T."/>
            <person name="Sasamoto S."/>
            <person name="Watanabe A."/>
            <person name="Iriguchi M."/>
            <person name="Ishikawa A."/>
            <person name="Kawashima K."/>
            <person name="Kimura T."/>
            <person name="Kishida Y."/>
            <person name="Kohara M."/>
            <person name="Matsumoto M."/>
            <person name="Matsuno A."/>
            <person name="Muraki A."/>
            <person name="Nakazaki N."/>
            <person name="Shimpo S."/>
            <person name="Sugimoto M."/>
            <person name="Takazawa M."/>
            <person name="Yamada M."/>
            <person name="Yasuda M."/>
            <person name="Tabata S."/>
        </authorList>
    </citation>
    <scope>NUCLEOTIDE SEQUENCE [LARGE SCALE GENOMIC DNA]</scope>
    <source>
        <strain>PCC 7120 / SAG 25.82 / UTEX 2576</strain>
    </source>
</reference>
<reference key="4">
    <citation type="journal article" date="2010" name="J. Bacteriol.">
        <title>Transcriptional regulation of the heterocyst patterning gene patA from Anabaena sp. strain PCC 7120.</title>
        <authorList>
            <person name="Young-Robbins S.S."/>
            <person name="Risser D.D."/>
            <person name="Moran J.R."/>
            <person name="Haselkorn R."/>
            <person name="Callahan S.M."/>
        </authorList>
    </citation>
    <scope>FUNCTION</scope>
    <scope>SUBCELLULAR LOCATION</scope>
    <scope>INDUCTION</scope>
    <source>
        <strain>PCC 7120 / SAG 25.82 / UTEX 2576</strain>
    </source>
</reference>
<reference key="5">
    <citation type="journal article" date="2010" name="J. Bacteriol.">
        <title>NtcA regulates patA expression in Anabaena sp. strain PCC 7120.</title>
        <authorList>
            <person name="Bastet L."/>
            <person name="Boileau C."/>
            <person name="Bedu S."/>
            <person name="Janicki A."/>
            <person name="Latifi A."/>
            <person name="Zhang C.C."/>
        </authorList>
    </citation>
    <scope>FUNCTION</scope>
    <scope>INDUCTION</scope>
</reference>
<sequence>MKTLPITRYRFFQKIQPLSLLKKITGKTITGCLQVFSTSGTWSIYVEEGKLIYACYSERMFEPLYRHLGNLSPQIATLPKEINEQLRAIFETGIENQAIPNPDYLAICWLVNQKYISSSQAAVLIEQLALEVVESFLMLEEGSYEFIPESFLDDLPKFCYLNVRLLVEQCQQHGRVPEAFRREASSQEISSSTEHNQIPVNNRRSTKFTSPPHTQPKPEPRLPQINTNKSTEYSKRYASQPNTVNHGYSQTSATSTDKKIYTIFCIDENPIVLNNIKNFLDDQIFAVIGVTDSLKALMEILCTKPDIILINVDMPDLDGYELCSLLRKHSYFKNTPVIMVTEKAGLVDRARAKIVRASGHLTKPFNQGDLLKVIFKHIT</sequence>
<keyword id="KW-0364">Heterocyst</keyword>
<keyword id="KW-0597">Phosphoprotein</keyword>
<keyword id="KW-1185">Reference proteome</keyword>
<keyword id="KW-0902">Two-component regulatory system</keyword>
<gene>
    <name type="primary">patA</name>
    <name type="ordered locus">all0521</name>
</gene>